<name>LRC56_MOUSE</name>
<proteinExistence type="evidence at transcript level"/>
<accession>Q8K375</accession>
<accession>Q571F2</accession>
<organism>
    <name type="scientific">Mus musculus</name>
    <name type="common">Mouse</name>
    <dbReference type="NCBI Taxonomy" id="10090"/>
    <lineage>
        <taxon>Eukaryota</taxon>
        <taxon>Metazoa</taxon>
        <taxon>Chordata</taxon>
        <taxon>Craniata</taxon>
        <taxon>Vertebrata</taxon>
        <taxon>Euteleostomi</taxon>
        <taxon>Mammalia</taxon>
        <taxon>Eutheria</taxon>
        <taxon>Euarchontoglires</taxon>
        <taxon>Glires</taxon>
        <taxon>Rodentia</taxon>
        <taxon>Myomorpha</taxon>
        <taxon>Muroidea</taxon>
        <taxon>Muridae</taxon>
        <taxon>Murinae</taxon>
        <taxon>Mus</taxon>
        <taxon>Mus</taxon>
    </lineage>
</organism>
<evidence type="ECO:0000250" key="1">
    <source>
        <dbReference type="UniProtKB" id="Q387Y5"/>
    </source>
</evidence>
<evidence type="ECO:0000250" key="2">
    <source>
        <dbReference type="UniProtKB" id="Q8IYG6"/>
    </source>
</evidence>
<evidence type="ECO:0000256" key="3">
    <source>
        <dbReference type="SAM" id="MobiDB-lite"/>
    </source>
</evidence>
<evidence type="ECO:0000305" key="4"/>
<reference key="1">
    <citation type="submission" date="2005-02" db="EMBL/GenBank/DDBJ databases">
        <title>Prediction of the coding sequences of mouse homologues of KIAA gene. The complete nucleotide sequences of mouse KIAA-homologous cDNAs identified by screening of terminal sequences of cDNA clones randomly sampled from size-fractionated libraries.</title>
        <authorList>
            <person name="Okazaki N."/>
            <person name="Kikuno R.F."/>
            <person name="Ohara R."/>
            <person name="Inamoto S."/>
            <person name="Nagase T."/>
            <person name="Ohara O."/>
            <person name="Koga H."/>
        </authorList>
    </citation>
    <scope>NUCLEOTIDE SEQUENCE [LARGE SCALE MRNA]</scope>
    <source>
        <tissue>Pancreatic islet</tissue>
    </source>
</reference>
<reference key="2">
    <citation type="journal article" date="2004" name="Genome Res.">
        <title>The status, quality, and expansion of the NIH full-length cDNA project: the Mammalian Gene Collection (MGC).</title>
        <authorList>
            <consortium name="The MGC Project Team"/>
        </authorList>
    </citation>
    <scope>NUCLEOTIDE SEQUENCE [LARGE SCALE MRNA]</scope>
    <source>
        <strain>FVB/N</strain>
        <tissue>Mammary tumor</tissue>
    </source>
</reference>
<feature type="chain" id="PRO_0000229924" description="Leucine-rich repeat-containing protein 56">
    <location>
        <begin position="1"/>
        <end position="552"/>
    </location>
</feature>
<feature type="repeat" description="LRR 1">
    <location>
        <begin position="94"/>
        <end position="115"/>
    </location>
</feature>
<feature type="repeat" description="LRR 2">
    <location>
        <begin position="117"/>
        <end position="138"/>
    </location>
</feature>
<feature type="repeat" description="LRR 3">
    <location>
        <begin position="139"/>
        <end position="160"/>
    </location>
</feature>
<feature type="repeat" description="LRR 4">
    <location>
        <begin position="161"/>
        <end position="182"/>
    </location>
</feature>
<feature type="repeat" description="LRR 5">
    <location>
        <begin position="186"/>
        <end position="206"/>
    </location>
</feature>
<feature type="region of interest" description="Disordered" evidence="3">
    <location>
        <begin position="348"/>
        <end position="375"/>
    </location>
</feature>
<feature type="region of interest" description="Disordered" evidence="3">
    <location>
        <begin position="401"/>
        <end position="435"/>
    </location>
</feature>
<dbReference type="EMBL" id="AK220237">
    <property type="protein sequence ID" value="BAD90162.1"/>
    <property type="status" value="ALT_INIT"/>
    <property type="molecule type" value="mRNA"/>
</dbReference>
<dbReference type="EMBL" id="BC027807">
    <property type="protein sequence ID" value="AAH27807.1"/>
    <property type="molecule type" value="mRNA"/>
</dbReference>
<dbReference type="CCDS" id="CCDS22004.1"/>
<dbReference type="RefSeq" id="NP_001165535.1">
    <property type="nucleotide sequence ID" value="NM_001172064.1"/>
</dbReference>
<dbReference type="RefSeq" id="NP_001344754.1">
    <property type="nucleotide sequence ID" value="NM_001357825.1"/>
</dbReference>
<dbReference type="RefSeq" id="NP_722472.1">
    <property type="nucleotide sequence ID" value="NM_153777.2"/>
</dbReference>
<dbReference type="RefSeq" id="XP_006536306.1">
    <property type="nucleotide sequence ID" value="XM_006536243.2"/>
</dbReference>
<dbReference type="SMR" id="Q8K375"/>
<dbReference type="FunCoup" id="Q8K375">
    <property type="interactions" value="10"/>
</dbReference>
<dbReference type="STRING" id="10090.ENSMUSP00000063912"/>
<dbReference type="iPTMnet" id="Q8K375"/>
<dbReference type="PhosphoSitePlus" id="Q8K375"/>
<dbReference type="PaxDb" id="10090-ENSMUSP00000063912"/>
<dbReference type="ProteomicsDB" id="290158"/>
<dbReference type="Antibodypedia" id="22521">
    <property type="antibodies" value="31 antibodies from 14 providers"/>
</dbReference>
<dbReference type="DNASU" id="70552"/>
<dbReference type="Ensembl" id="ENSMUST00000047093.11">
    <property type="protein sequence ID" value="ENSMUSP00000048691.5"/>
    <property type="gene ID" value="ENSMUSG00000038637.16"/>
</dbReference>
<dbReference type="Ensembl" id="ENSMUST00000070458.11">
    <property type="protein sequence ID" value="ENSMUSP00000063912.5"/>
    <property type="gene ID" value="ENSMUSG00000038637.16"/>
</dbReference>
<dbReference type="GeneID" id="70552"/>
<dbReference type="KEGG" id="mmu:70552"/>
<dbReference type="UCSC" id="uc009kjx.2">
    <property type="organism name" value="mouse"/>
</dbReference>
<dbReference type="AGR" id="MGI:1917802"/>
<dbReference type="CTD" id="115399"/>
<dbReference type="MGI" id="MGI:1917802">
    <property type="gene designation" value="Lrrc56"/>
</dbReference>
<dbReference type="VEuPathDB" id="HostDB:ENSMUSG00000038637"/>
<dbReference type="eggNOG" id="KOG0531">
    <property type="taxonomic scope" value="Eukaryota"/>
</dbReference>
<dbReference type="GeneTree" id="ENSGT00390000001545"/>
<dbReference type="HOGENOM" id="CLU_031382_2_0_1"/>
<dbReference type="InParanoid" id="Q8K375"/>
<dbReference type="OMA" id="NMLEMCV"/>
<dbReference type="OrthoDB" id="676979at2759"/>
<dbReference type="PhylomeDB" id="Q8K375"/>
<dbReference type="TreeFam" id="TF326690"/>
<dbReference type="BioGRID-ORCS" id="70552">
    <property type="hits" value="3 hits in 76 CRISPR screens"/>
</dbReference>
<dbReference type="ChiTaRS" id="Lrrc56">
    <property type="organism name" value="mouse"/>
</dbReference>
<dbReference type="PRO" id="PR:Q8K375"/>
<dbReference type="Proteomes" id="UP000000589">
    <property type="component" value="Chromosome 7"/>
</dbReference>
<dbReference type="RNAct" id="Q8K375">
    <property type="molecule type" value="protein"/>
</dbReference>
<dbReference type="Bgee" id="ENSMUSG00000038637">
    <property type="expression patterns" value="Expressed in spermatocyte and 155 other cell types or tissues"/>
</dbReference>
<dbReference type="ExpressionAtlas" id="Q8K375">
    <property type="expression patterns" value="baseline and differential"/>
</dbReference>
<dbReference type="GO" id="GO:0005929">
    <property type="term" value="C:cilium"/>
    <property type="evidence" value="ECO:0007669"/>
    <property type="project" value="UniProtKB-SubCell"/>
</dbReference>
<dbReference type="GO" id="GO:0030030">
    <property type="term" value="P:cell projection organization"/>
    <property type="evidence" value="ECO:0007669"/>
    <property type="project" value="UniProtKB-KW"/>
</dbReference>
<dbReference type="Gene3D" id="3.80.10.10">
    <property type="entry name" value="Ribonuclease Inhibitor"/>
    <property type="match status" value="1"/>
</dbReference>
<dbReference type="InterPro" id="IPR001611">
    <property type="entry name" value="Leu-rich_rpt"/>
</dbReference>
<dbReference type="InterPro" id="IPR025875">
    <property type="entry name" value="Leu-rich_rpt_4"/>
</dbReference>
<dbReference type="InterPro" id="IPR032675">
    <property type="entry name" value="LRR_dom_sf"/>
</dbReference>
<dbReference type="InterPro" id="IPR040091">
    <property type="entry name" value="LRRC56"/>
</dbReference>
<dbReference type="PANTHER" id="PTHR22708">
    <property type="entry name" value="LEUCINE-RICH REPEAT-CONTAINING PROTEIN 56"/>
    <property type="match status" value="1"/>
</dbReference>
<dbReference type="PANTHER" id="PTHR22708:SF0">
    <property type="entry name" value="LEUCINE-RICH REPEAT-CONTAINING PROTEIN 56"/>
    <property type="match status" value="1"/>
</dbReference>
<dbReference type="Pfam" id="PF12799">
    <property type="entry name" value="LRR_4"/>
    <property type="match status" value="1"/>
</dbReference>
<dbReference type="SUPFAM" id="SSF52058">
    <property type="entry name" value="L domain-like"/>
    <property type="match status" value="1"/>
</dbReference>
<dbReference type="PROSITE" id="PS51450">
    <property type="entry name" value="LRR"/>
    <property type="match status" value="4"/>
</dbReference>
<protein>
    <recommendedName>
        <fullName>Leucine-rich repeat-containing protein 56</fullName>
    </recommendedName>
</protein>
<sequence>MDPAWDGSQGSRPGTASIRVRELSWQGLNNPHPQNKRLGSHGDIHRERWVEERLSPARLQALAQVDDLQLVRVLEMCVDTRKNSLGNFGLYLPNLIQLKLNHSYLGSLRDLGTSLGHLQVLWLARCGLTDLDGIGSFLELKELYVSYNNISDLSPLCLLEQLEVLDLEGNNVEDLGQMRYLQLCPRLAMLTLEGNLVCLKPDPGPSNKAPQGYNYRAEVKKLIPQLHVLDEVPTTCTSAPAPQTLSQDWLMVKEAIKEGSVLDILLPRLDDPHGATIRKFDPTLPVPETQPWALSLLVPGGPLPEGLLSENPATEDHASNLTHGPGQVLCGNPTKGLRKRRNQYQEWAPLEQMPPHRPDLAIRPSTPRPDPAESCDLAMTGLRAWTEPGLRPLLQRQLEFQQERSAQVQAQDPQKDPVEQEDQTGPKTSLTPPRLVSELSRTSGFHLIPSPPKYPMPPESGISSLGRSADLPFRGRRLRVLGSLGPSLGEGSVLGERLAAVTALRALEASSGPSHRAQGCPDPKPALGPAACPPGLHCLHHLNPIPPAHSLP</sequence>
<keyword id="KW-0966">Cell projection</keyword>
<keyword id="KW-0969">Cilium</keyword>
<keyword id="KW-0970">Cilium biogenesis/degradation</keyword>
<keyword id="KW-0433">Leucine-rich repeat</keyword>
<keyword id="KW-1185">Reference proteome</keyword>
<keyword id="KW-0677">Repeat</keyword>
<gene>
    <name type="primary">Lrrc56</name>
</gene>
<comment type="function">
    <text evidence="1">Required for the assembly of dynein arms.</text>
</comment>
<comment type="subunit">
    <text evidence="2">Interacts with IFT88.</text>
</comment>
<comment type="subcellular location">
    <subcellularLocation>
        <location evidence="1">Cell projection</location>
        <location evidence="1">Cilium</location>
    </subcellularLocation>
</comment>
<comment type="similarity">
    <text evidence="4">Belongs to the LRRC56 family.</text>
</comment>
<comment type="sequence caution" evidence="4">
    <conflict type="erroneous initiation">
        <sequence resource="EMBL-CDS" id="BAD90162"/>
    </conflict>
</comment>